<name>CH10_ARTS2</name>
<gene>
    <name evidence="1" type="primary">groES</name>
    <name evidence="1" type="synonym">groS</name>
    <name type="ordered locus">Arth_2887</name>
</gene>
<evidence type="ECO:0000255" key="1">
    <source>
        <dbReference type="HAMAP-Rule" id="MF_00580"/>
    </source>
</evidence>
<proteinExistence type="inferred from homology"/>
<accession>A0JYZ6</accession>
<dbReference type="EMBL" id="CP000454">
    <property type="protein sequence ID" value="ABK04266.1"/>
    <property type="molecule type" value="Genomic_DNA"/>
</dbReference>
<dbReference type="RefSeq" id="WP_003805290.1">
    <property type="nucleotide sequence ID" value="NC_008541.1"/>
</dbReference>
<dbReference type="SMR" id="A0JYZ6"/>
<dbReference type="STRING" id="290399.Arth_2887"/>
<dbReference type="GeneID" id="97421091"/>
<dbReference type="KEGG" id="art:Arth_2887"/>
<dbReference type="eggNOG" id="COG0234">
    <property type="taxonomic scope" value="Bacteria"/>
</dbReference>
<dbReference type="HOGENOM" id="CLU_132825_2_0_11"/>
<dbReference type="OrthoDB" id="9806791at2"/>
<dbReference type="Proteomes" id="UP000000754">
    <property type="component" value="Chromosome"/>
</dbReference>
<dbReference type="GO" id="GO:0005737">
    <property type="term" value="C:cytoplasm"/>
    <property type="evidence" value="ECO:0007669"/>
    <property type="project" value="UniProtKB-SubCell"/>
</dbReference>
<dbReference type="GO" id="GO:0005524">
    <property type="term" value="F:ATP binding"/>
    <property type="evidence" value="ECO:0007669"/>
    <property type="project" value="InterPro"/>
</dbReference>
<dbReference type="GO" id="GO:0046872">
    <property type="term" value="F:metal ion binding"/>
    <property type="evidence" value="ECO:0007669"/>
    <property type="project" value="TreeGrafter"/>
</dbReference>
<dbReference type="GO" id="GO:0044183">
    <property type="term" value="F:protein folding chaperone"/>
    <property type="evidence" value="ECO:0007669"/>
    <property type="project" value="InterPro"/>
</dbReference>
<dbReference type="GO" id="GO:0051087">
    <property type="term" value="F:protein-folding chaperone binding"/>
    <property type="evidence" value="ECO:0007669"/>
    <property type="project" value="TreeGrafter"/>
</dbReference>
<dbReference type="GO" id="GO:0051082">
    <property type="term" value="F:unfolded protein binding"/>
    <property type="evidence" value="ECO:0007669"/>
    <property type="project" value="TreeGrafter"/>
</dbReference>
<dbReference type="GO" id="GO:0051085">
    <property type="term" value="P:chaperone cofactor-dependent protein refolding"/>
    <property type="evidence" value="ECO:0007669"/>
    <property type="project" value="TreeGrafter"/>
</dbReference>
<dbReference type="CDD" id="cd00320">
    <property type="entry name" value="cpn10"/>
    <property type="match status" value="1"/>
</dbReference>
<dbReference type="FunFam" id="2.30.33.40:FF:000001">
    <property type="entry name" value="10 kDa chaperonin"/>
    <property type="match status" value="1"/>
</dbReference>
<dbReference type="Gene3D" id="2.30.33.40">
    <property type="entry name" value="GroES chaperonin"/>
    <property type="match status" value="1"/>
</dbReference>
<dbReference type="HAMAP" id="MF_00580">
    <property type="entry name" value="CH10"/>
    <property type="match status" value="1"/>
</dbReference>
<dbReference type="InterPro" id="IPR020818">
    <property type="entry name" value="Chaperonin_GroES"/>
</dbReference>
<dbReference type="InterPro" id="IPR037124">
    <property type="entry name" value="Chaperonin_GroES_sf"/>
</dbReference>
<dbReference type="InterPro" id="IPR018369">
    <property type="entry name" value="Chaprnonin_Cpn10_CS"/>
</dbReference>
<dbReference type="InterPro" id="IPR011032">
    <property type="entry name" value="GroES-like_sf"/>
</dbReference>
<dbReference type="NCBIfam" id="NF001530">
    <property type="entry name" value="PRK00364.1-6"/>
    <property type="match status" value="1"/>
</dbReference>
<dbReference type="NCBIfam" id="NF001531">
    <property type="entry name" value="PRK00364.2-2"/>
    <property type="match status" value="1"/>
</dbReference>
<dbReference type="NCBIfam" id="NF001533">
    <property type="entry name" value="PRK00364.2-4"/>
    <property type="match status" value="1"/>
</dbReference>
<dbReference type="NCBIfam" id="NF001534">
    <property type="entry name" value="PRK00364.2-5"/>
    <property type="match status" value="1"/>
</dbReference>
<dbReference type="PANTHER" id="PTHR10772">
    <property type="entry name" value="10 KDA HEAT SHOCK PROTEIN"/>
    <property type="match status" value="1"/>
</dbReference>
<dbReference type="PANTHER" id="PTHR10772:SF58">
    <property type="entry name" value="CO-CHAPERONIN GROES"/>
    <property type="match status" value="1"/>
</dbReference>
<dbReference type="Pfam" id="PF00166">
    <property type="entry name" value="Cpn10"/>
    <property type="match status" value="1"/>
</dbReference>
<dbReference type="PRINTS" id="PR00297">
    <property type="entry name" value="CHAPERONIN10"/>
</dbReference>
<dbReference type="SMART" id="SM00883">
    <property type="entry name" value="Cpn10"/>
    <property type="match status" value="1"/>
</dbReference>
<dbReference type="SUPFAM" id="SSF50129">
    <property type="entry name" value="GroES-like"/>
    <property type="match status" value="1"/>
</dbReference>
<dbReference type="PROSITE" id="PS00681">
    <property type="entry name" value="CHAPERONINS_CPN10"/>
    <property type="match status" value="1"/>
</dbReference>
<protein>
    <recommendedName>
        <fullName evidence="1">Co-chaperonin GroES</fullName>
    </recommendedName>
    <alternativeName>
        <fullName evidence="1">10 kDa chaperonin</fullName>
    </alternativeName>
    <alternativeName>
        <fullName evidence="1">Chaperonin-10</fullName>
        <shortName evidence="1">Cpn10</shortName>
    </alternativeName>
</protein>
<reference key="1">
    <citation type="journal article" date="2013" name="Stand. Genomic Sci.">
        <title>Complete genome sequence of Arthrobacter sp. strain FB24.</title>
        <authorList>
            <person name="Nakatsu C.H."/>
            <person name="Barabote R."/>
            <person name="Thompson S."/>
            <person name="Bruce D."/>
            <person name="Detter C."/>
            <person name="Brettin T."/>
            <person name="Han C."/>
            <person name="Beasley F."/>
            <person name="Chen W."/>
            <person name="Konopka A."/>
            <person name="Xie G."/>
        </authorList>
    </citation>
    <scope>NUCLEOTIDE SEQUENCE [LARGE SCALE GENOMIC DNA]</scope>
    <source>
        <strain>FB24</strain>
    </source>
</reference>
<comment type="function">
    <text evidence="1">Together with the chaperonin GroEL, plays an essential role in assisting protein folding. The GroEL-GroES system forms a nano-cage that allows encapsulation of the non-native substrate proteins and provides a physical environment optimized to promote and accelerate protein folding. GroES binds to the apical surface of the GroEL ring, thereby capping the opening of the GroEL channel.</text>
</comment>
<comment type="subunit">
    <text evidence="1">Heptamer of 7 subunits arranged in a ring. Interacts with the chaperonin GroEL.</text>
</comment>
<comment type="subcellular location">
    <subcellularLocation>
        <location evidence="1">Cytoplasm</location>
    </subcellularLocation>
</comment>
<comment type="similarity">
    <text evidence="1">Belongs to the GroES chaperonin family.</text>
</comment>
<organism>
    <name type="scientific">Arthrobacter sp. (strain FB24)</name>
    <dbReference type="NCBI Taxonomy" id="290399"/>
    <lineage>
        <taxon>Bacteria</taxon>
        <taxon>Bacillati</taxon>
        <taxon>Actinomycetota</taxon>
        <taxon>Actinomycetes</taxon>
        <taxon>Micrococcales</taxon>
        <taxon>Micrococcaceae</taxon>
        <taxon>Arthrobacter</taxon>
    </lineage>
</organism>
<keyword id="KW-0143">Chaperone</keyword>
<keyword id="KW-0963">Cytoplasm</keyword>
<keyword id="KW-1185">Reference proteome</keyword>
<sequence length="97" mass="10267">MSVSIKPLEDRIVVRPLEAEQTTASGLVIPDSAQEKPQEGEVVAVGPGRFEDGNRVPVDVAVGDVVIYSKYGGTEVKTGGTEYLVLSARDVLAIVVK</sequence>
<feature type="chain" id="PRO_1000025206" description="Co-chaperonin GroES">
    <location>
        <begin position="1"/>
        <end position="97"/>
    </location>
</feature>